<proteinExistence type="evidence at transcript level"/>
<sequence length="360" mass="39036">MSQGHGKYDFYIGLGLAMSSSIFIGGSFILKKKGLLRLARKGSTRAGQGGHAYLKEWLWWAGLLSMGAGEVANFAAYAFAPATLVTPLGALSVLVSAILSSYFLNERLNLHGKIGCLLSILGSTVMVIHAPKEEEIETLNEMSHKLGDPGFVVFATLVVIVSLILIFVVGPRHGQTNILVYITICSVIGAVSVSCAKGLGIAIKELFAGKPVLQHPLTWILLLSLIVCVSTQINYLNRALDIFNTSIVTPIYYVFFTTSVITCSAILFKEWQDMPVDDVIGTLSGFFTIIVGIFLLHAFKDVSFSLSSLPVSFRKDEKAVNGSLSSMYEVLNNNEESLTCGIEQHTAENISRRNGNLTAF</sequence>
<accession>Q3SWX0</accession>
<gene>
    <name type="primary">NIPA2</name>
</gene>
<feature type="chain" id="PRO_0000284446" description="Magnesium transporter NIPA2">
    <location>
        <begin position="1"/>
        <end position="360"/>
    </location>
</feature>
<feature type="topological domain" description="Extracellular" evidence="2">
    <location>
        <begin position="1"/>
        <end position="9"/>
    </location>
</feature>
<feature type="transmembrane region" description="Helical" evidence="2">
    <location>
        <begin position="10"/>
        <end position="30"/>
    </location>
</feature>
<feature type="topological domain" description="Cytoplasmic" evidence="2">
    <location>
        <begin position="31"/>
        <end position="56"/>
    </location>
</feature>
<feature type="transmembrane region" description="Helical" evidence="2">
    <location>
        <begin position="57"/>
        <end position="77"/>
    </location>
</feature>
<feature type="topological domain" description="Extracellular" evidence="2">
    <location>
        <position position="78"/>
    </location>
</feature>
<feature type="transmembrane region" description="Helical" evidence="2">
    <location>
        <begin position="79"/>
        <end position="99"/>
    </location>
</feature>
<feature type="topological domain" description="Cytoplasmic" evidence="2">
    <location>
        <begin position="100"/>
        <end position="107"/>
    </location>
</feature>
<feature type="transmembrane region" description="Helical" evidence="2">
    <location>
        <begin position="108"/>
        <end position="128"/>
    </location>
</feature>
<feature type="topological domain" description="Extracellular" evidence="2">
    <location>
        <begin position="129"/>
        <end position="149"/>
    </location>
</feature>
<feature type="transmembrane region" description="Helical" evidence="2">
    <location>
        <begin position="150"/>
        <end position="170"/>
    </location>
</feature>
<feature type="topological domain" description="Cytoplasmic" evidence="2">
    <location>
        <begin position="171"/>
        <end position="175"/>
    </location>
</feature>
<feature type="transmembrane region" description="Helical" evidence="2">
    <location>
        <begin position="176"/>
        <end position="196"/>
    </location>
</feature>
<feature type="topological domain" description="Extracellular" evidence="2">
    <location>
        <begin position="197"/>
        <end position="215"/>
    </location>
</feature>
<feature type="transmembrane region" description="Helical" evidence="2">
    <location>
        <begin position="216"/>
        <end position="236"/>
    </location>
</feature>
<feature type="topological domain" description="Cytoplasmic" evidence="2">
    <location>
        <begin position="237"/>
        <end position="246"/>
    </location>
</feature>
<feature type="transmembrane region" description="Helical" evidence="2">
    <location>
        <begin position="247"/>
        <end position="267"/>
    </location>
</feature>
<feature type="topological domain" description="Extracellular" evidence="2">
    <location>
        <begin position="268"/>
        <end position="278"/>
    </location>
</feature>
<feature type="transmembrane region" description="Helical" evidence="2">
    <location>
        <begin position="279"/>
        <end position="299"/>
    </location>
</feature>
<feature type="topological domain" description="Cytoplasmic" evidence="2">
    <location>
        <begin position="300"/>
        <end position="360"/>
    </location>
</feature>
<comment type="function">
    <text evidence="1">Acts as a selective Mg(2+) transporter.</text>
</comment>
<comment type="catalytic activity">
    <reaction evidence="1">
        <text>Mg(2+)(in) = Mg(2+)(out)</text>
        <dbReference type="Rhea" id="RHEA:29827"/>
        <dbReference type="ChEBI" id="CHEBI:18420"/>
    </reaction>
</comment>
<comment type="subcellular location">
    <subcellularLocation>
        <location evidence="1">Cell membrane</location>
        <topology evidence="2">Multi-pass membrane protein</topology>
    </subcellularLocation>
    <subcellularLocation>
        <location evidence="1">Early endosome</location>
    </subcellularLocation>
    <text evidence="1">Recruited to the cell membrane in response to low extracellular magnesium.</text>
</comment>
<comment type="similarity">
    <text evidence="3">Belongs to the NIPA family.</text>
</comment>
<dbReference type="EMBL" id="BC104627">
    <property type="protein sequence ID" value="AAI04628.1"/>
    <property type="molecule type" value="mRNA"/>
</dbReference>
<dbReference type="RefSeq" id="NP_001029470.1">
    <property type="nucleotide sequence ID" value="NM_001034298.1"/>
</dbReference>
<dbReference type="RefSeq" id="XP_005202224.1">
    <property type="nucleotide sequence ID" value="XM_005202167.4"/>
</dbReference>
<dbReference type="RefSeq" id="XP_005202229.1">
    <property type="nucleotide sequence ID" value="XM_005202172.4"/>
</dbReference>
<dbReference type="RefSeq" id="XP_005202231.1">
    <property type="nucleotide sequence ID" value="XM_005202174.3"/>
</dbReference>
<dbReference type="RefSeq" id="XP_015329780.1">
    <property type="nucleotide sequence ID" value="XM_015474294.3"/>
</dbReference>
<dbReference type="RefSeq" id="XP_024855717.1">
    <property type="nucleotide sequence ID" value="XM_024999949.2"/>
</dbReference>
<dbReference type="RefSeq" id="XP_024855718.1">
    <property type="nucleotide sequence ID" value="XM_024999950.2"/>
</dbReference>
<dbReference type="RefSeq" id="XP_024855731.1">
    <property type="nucleotide sequence ID" value="XM_024999963.2"/>
</dbReference>
<dbReference type="RefSeq" id="XP_059748381.1">
    <property type="nucleotide sequence ID" value="XM_059892398.1"/>
</dbReference>
<dbReference type="RefSeq" id="XP_059748386.1">
    <property type="nucleotide sequence ID" value="XM_059892403.1"/>
</dbReference>
<dbReference type="RefSeq" id="XP_059748388.1">
    <property type="nucleotide sequence ID" value="XM_059892405.1"/>
</dbReference>
<dbReference type="RefSeq" id="XP_059748392.1">
    <property type="nucleotide sequence ID" value="XM_059892409.1"/>
</dbReference>
<dbReference type="RefSeq" id="XP_059748393.1">
    <property type="nucleotide sequence ID" value="XM_059892410.1"/>
</dbReference>
<dbReference type="RefSeq" id="XP_059748396.1">
    <property type="nucleotide sequence ID" value="XM_059892413.1"/>
</dbReference>
<dbReference type="RefSeq" id="XP_059748398.1">
    <property type="nucleotide sequence ID" value="XM_059892415.1"/>
</dbReference>
<dbReference type="RefSeq" id="XP_059748401.1">
    <property type="nucleotide sequence ID" value="XM_059892418.1"/>
</dbReference>
<dbReference type="RefSeq" id="XP_059748402.1">
    <property type="nucleotide sequence ID" value="XM_059892419.1"/>
</dbReference>
<dbReference type="RefSeq" id="XP_059748403.1">
    <property type="nucleotide sequence ID" value="XM_059892420.1"/>
</dbReference>
<dbReference type="RefSeq" id="XP_059748409.1">
    <property type="nucleotide sequence ID" value="XM_059892426.1"/>
</dbReference>
<dbReference type="FunCoup" id="Q3SWX0">
    <property type="interactions" value="4162"/>
</dbReference>
<dbReference type="STRING" id="9913.ENSBTAP00000059190"/>
<dbReference type="PaxDb" id="9913-ENSBTAP00000022471"/>
<dbReference type="Ensembl" id="ENSBTAT00000022471.6">
    <property type="protein sequence ID" value="ENSBTAP00000022471.5"/>
    <property type="gene ID" value="ENSBTAG00000016895.7"/>
</dbReference>
<dbReference type="Ensembl" id="ENSBTAT00000079943.2">
    <property type="protein sequence ID" value="ENSBTAP00000067128.1"/>
    <property type="gene ID" value="ENSBTAG00000016895.7"/>
</dbReference>
<dbReference type="GeneID" id="507430"/>
<dbReference type="KEGG" id="bta:507430"/>
<dbReference type="CTD" id="81614"/>
<dbReference type="VEuPathDB" id="HostDB:ENSBTAG00000016895"/>
<dbReference type="VGNC" id="VGNC:53154">
    <property type="gene designation" value="NIPA2"/>
</dbReference>
<dbReference type="eggNOG" id="KOG2922">
    <property type="taxonomic scope" value="Eukaryota"/>
</dbReference>
<dbReference type="GeneTree" id="ENSGT00940000155651"/>
<dbReference type="HOGENOM" id="CLU_012349_1_1_1"/>
<dbReference type="InParanoid" id="Q3SWX0"/>
<dbReference type="OMA" id="PMVYISI"/>
<dbReference type="OrthoDB" id="6428174at2759"/>
<dbReference type="TreeFam" id="TF313214"/>
<dbReference type="Reactome" id="R-BTA-5223345">
    <property type="pathway name" value="Miscellaneous transport and binding events"/>
</dbReference>
<dbReference type="Proteomes" id="UP000009136">
    <property type="component" value="Chromosome 2"/>
</dbReference>
<dbReference type="Bgee" id="ENSBTAG00000016895">
    <property type="expression patterns" value="Expressed in monocyte and 105 other cell types or tissues"/>
</dbReference>
<dbReference type="GO" id="GO:0005769">
    <property type="term" value="C:early endosome"/>
    <property type="evidence" value="ECO:0007669"/>
    <property type="project" value="UniProtKB-SubCell"/>
</dbReference>
<dbReference type="GO" id="GO:0016020">
    <property type="term" value="C:membrane"/>
    <property type="evidence" value="ECO:0000318"/>
    <property type="project" value="GO_Central"/>
</dbReference>
<dbReference type="GO" id="GO:0005886">
    <property type="term" value="C:plasma membrane"/>
    <property type="evidence" value="ECO:0000250"/>
    <property type="project" value="UniProtKB"/>
</dbReference>
<dbReference type="GO" id="GO:0015095">
    <property type="term" value="F:magnesium ion transmembrane transporter activity"/>
    <property type="evidence" value="ECO:0007669"/>
    <property type="project" value="InterPro"/>
</dbReference>
<dbReference type="GO" id="GO:0015693">
    <property type="term" value="P:magnesium ion transport"/>
    <property type="evidence" value="ECO:0000250"/>
    <property type="project" value="UniProtKB"/>
</dbReference>
<dbReference type="Gene3D" id="1.10.3730.20">
    <property type="match status" value="1"/>
</dbReference>
<dbReference type="InterPro" id="IPR008521">
    <property type="entry name" value="Mg_trans_NIPA"/>
</dbReference>
<dbReference type="PANTHER" id="PTHR12570">
    <property type="match status" value="1"/>
</dbReference>
<dbReference type="PANTHER" id="PTHR12570:SF1">
    <property type="entry name" value="MAGNESIUM TRANSPORTER NIPA2"/>
    <property type="match status" value="1"/>
</dbReference>
<dbReference type="Pfam" id="PF05653">
    <property type="entry name" value="Mg_trans_NIPA"/>
    <property type="match status" value="1"/>
</dbReference>
<dbReference type="SUPFAM" id="SSF103481">
    <property type="entry name" value="Multidrug resistance efflux transporter EmrE"/>
    <property type="match status" value="1"/>
</dbReference>
<name>NIPA2_BOVIN</name>
<reference key="1">
    <citation type="submission" date="2005-09" db="EMBL/GenBank/DDBJ databases">
        <authorList>
            <consortium name="NIH - Mammalian Gene Collection (MGC) project"/>
        </authorList>
    </citation>
    <scope>NUCLEOTIDE SEQUENCE [LARGE SCALE MRNA]</scope>
    <source>
        <strain>Hereford</strain>
        <tissue>Ascending colon</tissue>
    </source>
</reference>
<organism>
    <name type="scientific">Bos taurus</name>
    <name type="common">Bovine</name>
    <dbReference type="NCBI Taxonomy" id="9913"/>
    <lineage>
        <taxon>Eukaryota</taxon>
        <taxon>Metazoa</taxon>
        <taxon>Chordata</taxon>
        <taxon>Craniata</taxon>
        <taxon>Vertebrata</taxon>
        <taxon>Euteleostomi</taxon>
        <taxon>Mammalia</taxon>
        <taxon>Eutheria</taxon>
        <taxon>Laurasiatheria</taxon>
        <taxon>Artiodactyla</taxon>
        <taxon>Ruminantia</taxon>
        <taxon>Pecora</taxon>
        <taxon>Bovidae</taxon>
        <taxon>Bovinae</taxon>
        <taxon>Bos</taxon>
    </lineage>
</organism>
<keyword id="KW-1003">Cell membrane</keyword>
<keyword id="KW-0967">Endosome</keyword>
<keyword id="KW-0406">Ion transport</keyword>
<keyword id="KW-0460">Magnesium</keyword>
<keyword id="KW-0472">Membrane</keyword>
<keyword id="KW-1185">Reference proteome</keyword>
<keyword id="KW-0812">Transmembrane</keyword>
<keyword id="KW-1133">Transmembrane helix</keyword>
<keyword id="KW-0813">Transport</keyword>
<evidence type="ECO:0000250" key="1">
    <source>
        <dbReference type="UniProtKB" id="Q9JJC8"/>
    </source>
</evidence>
<evidence type="ECO:0000255" key="2"/>
<evidence type="ECO:0000305" key="3"/>
<protein>
    <recommendedName>
        <fullName>Magnesium transporter NIPA2</fullName>
    </recommendedName>
    <alternativeName>
        <fullName>Non-imprinted in Prader-Willi/Angelman syndrome region protein 2 homolog</fullName>
    </alternativeName>
</protein>